<reference key="1">
    <citation type="journal article" date="2004" name="PLoS Biol.">
        <title>Phylogenomics of the reproductive parasite Wolbachia pipientis wMel: a streamlined genome overrun by mobile genetic elements.</title>
        <authorList>
            <person name="Wu M."/>
            <person name="Sun L.V."/>
            <person name="Vamathevan J.J."/>
            <person name="Riegler M."/>
            <person name="DeBoy R.T."/>
            <person name="Brownlie J.C."/>
            <person name="McGraw E.A."/>
            <person name="Martin W."/>
            <person name="Esser C."/>
            <person name="Ahmadinejad N."/>
            <person name="Wiegand C."/>
            <person name="Madupu R."/>
            <person name="Beanan M.J."/>
            <person name="Brinkac L.M."/>
            <person name="Daugherty S.C."/>
            <person name="Durkin A.S."/>
            <person name="Kolonay J.F."/>
            <person name="Nelson W.C."/>
            <person name="Mohamoud Y."/>
            <person name="Lee P."/>
            <person name="Berry K.J."/>
            <person name="Young M.B."/>
            <person name="Utterback T.R."/>
            <person name="Weidman J.F."/>
            <person name="Nierman W.C."/>
            <person name="Paulsen I.T."/>
            <person name="Nelson K.E."/>
            <person name="Tettelin H."/>
            <person name="O'Neill S.L."/>
            <person name="Eisen J.A."/>
        </authorList>
    </citation>
    <scope>NUCLEOTIDE SEQUENCE [LARGE SCALE GENOMIC DNA]</scope>
</reference>
<keyword id="KW-0143">Chaperone</keyword>
<keyword id="KW-0963">Cytoplasm</keyword>
<keyword id="KW-0235">DNA replication</keyword>
<keyword id="KW-0479">Metal-binding</keyword>
<keyword id="KW-0677">Repeat</keyword>
<keyword id="KW-0346">Stress response</keyword>
<keyword id="KW-0862">Zinc</keyword>
<keyword id="KW-0863">Zinc-finger</keyword>
<dbReference type="EMBL" id="AE017196">
    <property type="protein sequence ID" value="AAS13806.1"/>
    <property type="molecule type" value="Genomic_DNA"/>
</dbReference>
<dbReference type="RefSeq" id="WP_010962326.1">
    <property type="nucleotide sequence ID" value="NZ_OX384529.1"/>
</dbReference>
<dbReference type="SMR" id="Q73IV4"/>
<dbReference type="EnsemblBacteria" id="AAS13806">
    <property type="protein sequence ID" value="AAS13806"/>
    <property type="gene ID" value="WD_0040"/>
</dbReference>
<dbReference type="GeneID" id="70035533"/>
<dbReference type="KEGG" id="wol:WD_0040"/>
<dbReference type="eggNOG" id="COG0484">
    <property type="taxonomic scope" value="Bacteria"/>
</dbReference>
<dbReference type="Proteomes" id="UP000008215">
    <property type="component" value="Chromosome"/>
</dbReference>
<dbReference type="GO" id="GO:0005737">
    <property type="term" value="C:cytoplasm"/>
    <property type="evidence" value="ECO:0007669"/>
    <property type="project" value="UniProtKB-SubCell"/>
</dbReference>
<dbReference type="GO" id="GO:0005524">
    <property type="term" value="F:ATP binding"/>
    <property type="evidence" value="ECO:0007669"/>
    <property type="project" value="InterPro"/>
</dbReference>
<dbReference type="GO" id="GO:0031072">
    <property type="term" value="F:heat shock protein binding"/>
    <property type="evidence" value="ECO:0007669"/>
    <property type="project" value="InterPro"/>
</dbReference>
<dbReference type="GO" id="GO:0051082">
    <property type="term" value="F:unfolded protein binding"/>
    <property type="evidence" value="ECO:0007669"/>
    <property type="project" value="UniProtKB-UniRule"/>
</dbReference>
<dbReference type="GO" id="GO:0008270">
    <property type="term" value="F:zinc ion binding"/>
    <property type="evidence" value="ECO:0007669"/>
    <property type="project" value="UniProtKB-UniRule"/>
</dbReference>
<dbReference type="GO" id="GO:0051085">
    <property type="term" value="P:chaperone cofactor-dependent protein refolding"/>
    <property type="evidence" value="ECO:0007669"/>
    <property type="project" value="TreeGrafter"/>
</dbReference>
<dbReference type="GO" id="GO:0006260">
    <property type="term" value="P:DNA replication"/>
    <property type="evidence" value="ECO:0007669"/>
    <property type="project" value="UniProtKB-KW"/>
</dbReference>
<dbReference type="GO" id="GO:0042026">
    <property type="term" value="P:protein refolding"/>
    <property type="evidence" value="ECO:0007669"/>
    <property type="project" value="TreeGrafter"/>
</dbReference>
<dbReference type="GO" id="GO:0009408">
    <property type="term" value="P:response to heat"/>
    <property type="evidence" value="ECO:0007669"/>
    <property type="project" value="InterPro"/>
</dbReference>
<dbReference type="CDD" id="cd06257">
    <property type="entry name" value="DnaJ"/>
    <property type="match status" value="1"/>
</dbReference>
<dbReference type="CDD" id="cd10747">
    <property type="entry name" value="DnaJ_C"/>
    <property type="match status" value="1"/>
</dbReference>
<dbReference type="CDD" id="cd10719">
    <property type="entry name" value="DnaJ_zf"/>
    <property type="match status" value="1"/>
</dbReference>
<dbReference type="FunFam" id="1.10.287.110:FF:000034">
    <property type="entry name" value="Chaperone protein DnaJ"/>
    <property type="match status" value="1"/>
</dbReference>
<dbReference type="FunFam" id="2.60.260.20:FF:000005">
    <property type="entry name" value="Chaperone protein dnaJ 1, mitochondrial"/>
    <property type="match status" value="1"/>
</dbReference>
<dbReference type="FunFam" id="2.10.230.10:FF:000002">
    <property type="entry name" value="Molecular chaperone DnaJ"/>
    <property type="match status" value="1"/>
</dbReference>
<dbReference type="Gene3D" id="1.10.287.110">
    <property type="entry name" value="DnaJ domain"/>
    <property type="match status" value="1"/>
</dbReference>
<dbReference type="Gene3D" id="2.10.230.10">
    <property type="entry name" value="Heat shock protein DnaJ, cysteine-rich domain"/>
    <property type="match status" value="1"/>
</dbReference>
<dbReference type="Gene3D" id="2.60.260.20">
    <property type="entry name" value="Urease metallochaperone UreE, N-terminal domain"/>
    <property type="match status" value="2"/>
</dbReference>
<dbReference type="HAMAP" id="MF_01152">
    <property type="entry name" value="DnaJ"/>
    <property type="match status" value="1"/>
</dbReference>
<dbReference type="InterPro" id="IPR012724">
    <property type="entry name" value="DnaJ"/>
</dbReference>
<dbReference type="InterPro" id="IPR002939">
    <property type="entry name" value="DnaJ_C"/>
</dbReference>
<dbReference type="InterPro" id="IPR001623">
    <property type="entry name" value="DnaJ_domain"/>
</dbReference>
<dbReference type="InterPro" id="IPR018253">
    <property type="entry name" value="DnaJ_domain_CS"/>
</dbReference>
<dbReference type="InterPro" id="IPR008971">
    <property type="entry name" value="HSP40/DnaJ_pept-bd"/>
</dbReference>
<dbReference type="InterPro" id="IPR001305">
    <property type="entry name" value="HSP_DnaJ_Cys-rich_dom"/>
</dbReference>
<dbReference type="InterPro" id="IPR036410">
    <property type="entry name" value="HSP_DnaJ_Cys-rich_dom_sf"/>
</dbReference>
<dbReference type="InterPro" id="IPR036869">
    <property type="entry name" value="J_dom_sf"/>
</dbReference>
<dbReference type="NCBIfam" id="TIGR02349">
    <property type="entry name" value="DnaJ_bact"/>
    <property type="match status" value="1"/>
</dbReference>
<dbReference type="NCBIfam" id="NF008035">
    <property type="entry name" value="PRK10767.1"/>
    <property type="match status" value="1"/>
</dbReference>
<dbReference type="PANTHER" id="PTHR43096:SF48">
    <property type="entry name" value="CHAPERONE PROTEIN DNAJ"/>
    <property type="match status" value="1"/>
</dbReference>
<dbReference type="PANTHER" id="PTHR43096">
    <property type="entry name" value="DNAJ HOMOLOG 1, MITOCHONDRIAL-RELATED"/>
    <property type="match status" value="1"/>
</dbReference>
<dbReference type="Pfam" id="PF00226">
    <property type="entry name" value="DnaJ"/>
    <property type="match status" value="1"/>
</dbReference>
<dbReference type="Pfam" id="PF01556">
    <property type="entry name" value="DnaJ_C"/>
    <property type="match status" value="1"/>
</dbReference>
<dbReference type="Pfam" id="PF00684">
    <property type="entry name" value="DnaJ_CXXCXGXG"/>
    <property type="match status" value="1"/>
</dbReference>
<dbReference type="PRINTS" id="PR00625">
    <property type="entry name" value="JDOMAIN"/>
</dbReference>
<dbReference type="SMART" id="SM00271">
    <property type="entry name" value="DnaJ"/>
    <property type="match status" value="1"/>
</dbReference>
<dbReference type="SUPFAM" id="SSF46565">
    <property type="entry name" value="Chaperone J-domain"/>
    <property type="match status" value="1"/>
</dbReference>
<dbReference type="SUPFAM" id="SSF57938">
    <property type="entry name" value="DnaJ/Hsp40 cysteine-rich domain"/>
    <property type="match status" value="1"/>
</dbReference>
<dbReference type="SUPFAM" id="SSF49493">
    <property type="entry name" value="HSP40/DnaJ peptide-binding domain"/>
    <property type="match status" value="2"/>
</dbReference>
<dbReference type="PROSITE" id="PS00636">
    <property type="entry name" value="DNAJ_1"/>
    <property type="match status" value="1"/>
</dbReference>
<dbReference type="PROSITE" id="PS50076">
    <property type="entry name" value="DNAJ_2"/>
    <property type="match status" value="1"/>
</dbReference>
<dbReference type="PROSITE" id="PS51188">
    <property type="entry name" value="ZF_CR"/>
    <property type="match status" value="1"/>
</dbReference>
<proteinExistence type="inferred from homology"/>
<organism>
    <name type="scientific">Wolbachia pipientis wMel</name>
    <dbReference type="NCBI Taxonomy" id="163164"/>
    <lineage>
        <taxon>Bacteria</taxon>
        <taxon>Pseudomonadati</taxon>
        <taxon>Pseudomonadota</taxon>
        <taxon>Alphaproteobacteria</taxon>
        <taxon>Rickettsiales</taxon>
        <taxon>Anaplasmataceae</taxon>
        <taxon>Wolbachieae</taxon>
        <taxon>Wolbachia</taxon>
    </lineage>
</organism>
<gene>
    <name evidence="1" type="primary">dnaJ</name>
    <name type="ordered locus">WD_0040</name>
</gene>
<protein>
    <recommendedName>
        <fullName evidence="1">Chaperone protein DnaJ</fullName>
    </recommendedName>
</protein>
<name>DNAJ_WOLPM</name>
<accession>Q73IV4</accession>
<comment type="function">
    <text evidence="1">Participates actively in the response to hyperosmotic and heat shock by preventing the aggregation of stress-denatured proteins and by disaggregating proteins, also in an autonomous, DnaK-independent fashion. Unfolded proteins bind initially to DnaJ; upon interaction with the DnaJ-bound protein, DnaK hydrolyzes its bound ATP, resulting in the formation of a stable complex. GrpE releases ADP from DnaK; ATP binding to DnaK triggers the release of the substrate protein, thus completing the reaction cycle. Several rounds of ATP-dependent interactions between DnaJ, DnaK and GrpE are required for fully efficient folding. Also involved, together with DnaK and GrpE, in the DNA replication of plasmids through activation of initiation proteins.</text>
</comment>
<comment type="cofactor">
    <cofactor evidence="1">
        <name>Zn(2+)</name>
        <dbReference type="ChEBI" id="CHEBI:29105"/>
    </cofactor>
    <text evidence="1">Binds 2 Zn(2+) ions per monomer.</text>
</comment>
<comment type="subunit">
    <text evidence="1">Homodimer.</text>
</comment>
<comment type="subcellular location">
    <subcellularLocation>
        <location evidence="1">Cytoplasm</location>
    </subcellularLocation>
</comment>
<comment type="domain">
    <text evidence="1">The J domain is necessary and sufficient to stimulate DnaK ATPase activity. Zinc center 1 plays an important role in the autonomous, DnaK-independent chaperone activity of DnaJ. Zinc center 2 is essential for interaction with DnaK and for DnaJ activity.</text>
</comment>
<comment type="similarity">
    <text evidence="1">Belongs to the DnaJ family.</text>
</comment>
<sequence>MSKKDYYDLLEVGRNASIDEIKKAYKKLALRYHPDRNPGNQEAEEKFKEVTAAYEVLSDSEKRAGYDRYGHEGASGGFQGFSSAGDFSDIFNDFFGGGFGGGASRSRAKRSTTGVSGADLRYDLEITLEDAFKGIQAPIHYVTNVKCDTCQGTGGEGAIKPVQCHTCQGSGRIRTQQGFFTIERTCTTCYGEGEIIQNKCKKCGGSGRRRDEVNISVSIPKGIEEGAKVRISGKGEAGTKGGKSGDLYVYVKIIFHKIFARNKADLHCKVPIRMTLAVLGGEIDIQSIDGAKIKVKVPEGTQTGTKLRCREKGMPYMNSHARGDLYVQVIVETLNPKNLTKKQIELLKALEEEENASVQQQSEGFFSKVKKK</sequence>
<evidence type="ECO:0000255" key="1">
    <source>
        <dbReference type="HAMAP-Rule" id="MF_01152"/>
    </source>
</evidence>
<feature type="chain" id="PRO_0000070934" description="Chaperone protein DnaJ">
    <location>
        <begin position="1"/>
        <end position="372"/>
    </location>
</feature>
<feature type="domain" description="J" evidence="1">
    <location>
        <begin position="5"/>
        <end position="70"/>
    </location>
</feature>
<feature type="repeat" description="CXXCXGXG motif">
    <location>
        <begin position="147"/>
        <end position="154"/>
    </location>
</feature>
<feature type="repeat" description="CXXCXGXG motif">
    <location>
        <begin position="164"/>
        <end position="171"/>
    </location>
</feature>
<feature type="repeat" description="CXXCXGXG motif">
    <location>
        <begin position="186"/>
        <end position="193"/>
    </location>
</feature>
<feature type="repeat" description="CXXCXGXG motif">
    <location>
        <begin position="200"/>
        <end position="207"/>
    </location>
</feature>
<feature type="zinc finger region" description="CR-type" evidence="1">
    <location>
        <begin position="134"/>
        <end position="212"/>
    </location>
</feature>
<feature type="binding site" evidence="1">
    <location>
        <position position="147"/>
    </location>
    <ligand>
        <name>Zn(2+)</name>
        <dbReference type="ChEBI" id="CHEBI:29105"/>
        <label>1</label>
    </ligand>
</feature>
<feature type="binding site" evidence="1">
    <location>
        <position position="150"/>
    </location>
    <ligand>
        <name>Zn(2+)</name>
        <dbReference type="ChEBI" id="CHEBI:29105"/>
        <label>1</label>
    </ligand>
</feature>
<feature type="binding site" evidence="1">
    <location>
        <position position="164"/>
    </location>
    <ligand>
        <name>Zn(2+)</name>
        <dbReference type="ChEBI" id="CHEBI:29105"/>
        <label>2</label>
    </ligand>
</feature>
<feature type="binding site" evidence="1">
    <location>
        <position position="167"/>
    </location>
    <ligand>
        <name>Zn(2+)</name>
        <dbReference type="ChEBI" id="CHEBI:29105"/>
        <label>2</label>
    </ligand>
</feature>
<feature type="binding site" evidence="1">
    <location>
        <position position="186"/>
    </location>
    <ligand>
        <name>Zn(2+)</name>
        <dbReference type="ChEBI" id="CHEBI:29105"/>
        <label>2</label>
    </ligand>
</feature>
<feature type="binding site" evidence="1">
    <location>
        <position position="189"/>
    </location>
    <ligand>
        <name>Zn(2+)</name>
        <dbReference type="ChEBI" id="CHEBI:29105"/>
        <label>2</label>
    </ligand>
</feature>
<feature type="binding site" evidence="1">
    <location>
        <position position="200"/>
    </location>
    <ligand>
        <name>Zn(2+)</name>
        <dbReference type="ChEBI" id="CHEBI:29105"/>
        <label>1</label>
    </ligand>
</feature>
<feature type="binding site" evidence="1">
    <location>
        <position position="203"/>
    </location>
    <ligand>
        <name>Zn(2+)</name>
        <dbReference type="ChEBI" id="CHEBI:29105"/>
        <label>1</label>
    </ligand>
</feature>